<dbReference type="EMBL" id="CP001616">
    <property type="protein sequence ID" value="ACQ94351.1"/>
    <property type="molecule type" value="Genomic_DNA"/>
</dbReference>
<dbReference type="RefSeq" id="WP_015879800.1">
    <property type="nucleotide sequence ID" value="NC_012691.1"/>
</dbReference>
<dbReference type="SMR" id="C4LBS7"/>
<dbReference type="KEGG" id="tau:Tola_2758"/>
<dbReference type="eggNOG" id="COG0684">
    <property type="taxonomic scope" value="Bacteria"/>
</dbReference>
<dbReference type="HOGENOM" id="CLU_072626_4_0_6"/>
<dbReference type="OrthoDB" id="943692at2"/>
<dbReference type="Proteomes" id="UP000009073">
    <property type="component" value="Chromosome"/>
</dbReference>
<dbReference type="GO" id="GO:0005737">
    <property type="term" value="C:cytoplasm"/>
    <property type="evidence" value="ECO:0007669"/>
    <property type="project" value="UniProtKB-SubCell"/>
</dbReference>
<dbReference type="GO" id="GO:0060698">
    <property type="term" value="F:endoribonuclease inhibitor activity"/>
    <property type="evidence" value="ECO:0007669"/>
    <property type="project" value="UniProtKB-UniRule"/>
</dbReference>
<dbReference type="GO" id="GO:0019899">
    <property type="term" value="F:enzyme binding"/>
    <property type="evidence" value="ECO:0007669"/>
    <property type="project" value="UniProtKB-UniRule"/>
</dbReference>
<dbReference type="GO" id="GO:0051252">
    <property type="term" value="P:regulation of RNA metabolic process"/>
    <property type="evidence" value="ECO:0007669"/>
    <property type="project" value="InterPro"/>
</dbReference>
<dbReference type="CDD" id="cd16841">
    <property type="entry name" value="RraA_family"/>
    <property type="match status" value="1"/>
</dbReference>
<dbReference type="Gene3D" id="3.50.30.40">
    <property type="entry name" value="Ribonuclease E inhibitor RraA/RraA-like"/>
    <property type="match status" value="1"/>
</dbReference>
<dbReference type="HAMAP" id="MF_00471">
    <property type="entry name" value="RraA"/>
    <property type="match status" value="1"/>
</dbReference>
<dbReference type="InterPro" id="IPR010203">
    <property type="entry name" value="RraA"/>
</dbReference>
<dbReference type="InterPro" id="IPR005493">
    <property type="entry name" value="RraA/RraA-like"/>
</dbReference>
<dbReference type="InterPro" id="IPR036704">
    <property type="entry name" value="RraA/RraA-like_sf"/>
</dbReference>
<dbReference type="InterPro" id="IPR014339">
    <property type="entry name" value="RraA_gpbac"/>
</dbReference>
<dbReference type="NCBIfam" id="TIGR01935">
    <property type="entry name" value="NOT-MenG"/>
    <property type="match status" value="1"/>
</dbReference>
<dbReference type="NCBIfam" id="NF006875">
    <property type="entry name" value="PRK09372.1"/>
    <property type="match status" value="1"/>
</dbReference>
<dbReference type="NCBIfam" id="TIGR02998">
    <property type="entry name" value="RraA_entero"/>
    <property type="match status" value="1"/>
</dbReference>
<dbReference type="PANTHER" id="PTHR33254">
    <property type="entry name" value="4-HYDROXY-4-METHYL-2-OXOGLUTARATE ALDOLASE 3-RELATED"/>
    <property type="match status" value="1"/>
</dbReference>
<dbReference type="PANTHER" id="PTHR33254:SF29">
    <property type="entry name" value="REGULATOR OF RIBONUCLEASE ACTIVITY A"/>
    <property type="match status" value="1"/>
</dbReference>
<dbReference type="Pfam" id="PF03737">
    <property type="entry name" value="RraA-like"/>
    <property type="match status" value="1"/>
</dbReference>
<dbReference type="SUPFAM" id="SSF89562">
    <property type="entry name" value="RraA-like"/>
    <property type="match status" value="1"/>
</dbReference>
<comment type="function">
    <text evidence="1">Globally modulates RNA abundance by binding to RNase E (Rne) and regulating its endonucleolytic activity. Can modulate Rne action in a substrate-dependent manner by altering the composition of the degradosome. Modulates RNA-binding and helicase activities of the degradosome.</text>
</comment>
<comment type="subunit">
    <text evidence="1">Homotrimer. Binds to both RNA-binding sites in the C-terminal region of Rne and to RhlB.</text>
</comment>
<comment type="subcellular location">
    <subcellularLocation>
        <location evidence="1">Cytoplasm</location>
    </subcellularLocation>
</comment>
<comment type="similarity">
    <text evidence="1">Belongs to the RraA family.</text>
</comment>
<keyword id="KW-0963">Cytoplasm</keyword>
<keyword id="KW-1185">Reference proteome</keyword>
<organism>
    <name type="scientific">Tolumonas auensis (strain DSM 9187 / NBRC 110442 / TA 4)</name>
    <dbReference type="NCBI Taxonomy" id="595494"/>
    <lineage>
        <taxon>Bacteria</taxon>
        <taxon>Pseudomonadati</taxon>
        <taxon>Pseudomonadota</taxon>
        <taxon>Gammaproteobacteria</taxon>
        <taxon>Aeromonadales</taxon>
        <taxon>Aeromonadaceae</taxon>
        <taxon>Tolumonas</taxon>
    </lineage>
</organism>
<reference key="1">
    <citation type="submission" date="2009-05" db="EMBL/GenBank/DDBJ databases">
        <title>Complete sequence of Tolumonas auensis DSM 9187.</title>
        <authorList>
            <consortium name="US DOE Joint Genome Institute"/>
            <person name="Lucas S."/>
            <person name="Copeland A."/>
            <person name="Lapidus A."/>
            <person name="Glavina del Rio T."/>
            <person name="Tice H."/>
            <person name="Bruce D."/>
            <person name="Goodwin L."/>
            <person name="Pitluck S."/>
            <person name="Chertkov O."/>
            <person name="Brettin T."/>
            <person name="Detter J.C."/>
            <person name="Han C."/>
            <person name="Larimer F."/>
            <person name="Land M."/>
            <person name="Hauser L."/>
            <person name="Kyrpides N."/>
            <person name="Mikhailova N."/>
            <person name="Spring S."/>
            <person name="Beller H."/>
        </authorList>
    </citation>
    <scope>NUCLEOTIDE SEQUENCE [LARGE SCALE GENOMIC DNA]</scope>
    <source>
        <strain>DSM 9187 / NBRC 110442 / TA 4</strain>
    </source>
</reference>
<accession>C4LBS7</accession>
<protein>
    <recommendedName>
        <fullName evidence="1">Regulator of ribonuclease activity A</fullName>
    </recommendedName>
</protein>
<feature type="chain" id="PRO_1000206353" description="Regulator of ribonuclease activity A">
    <location>
        <begin position="1"/>
        <end position="161"/>
    </location>
</feature>
<name>RRAA_TOLAT</name>
<gene>
    <name evidence="1" type="primary">rraA</name>
    <name type="ordered locus">Tola_2758</name>
</gene>
<sequence>MEYNTSQLCDIYQDQVDVVEPMFSTFGGRSSFGGLVTTIKCFEANGIIRQIVKESGVGRVLLIDGGGSLRRALIDADIAAIAADNGWEGIICYGSVREVDALADLEIGIQALASIPVGADEDDTGDSELPVNFGGVTFLPEDHIYADTTGVILSPEPLDIE</sequence>
<evidence type="ECO:0000255" key="1">
    <source>
        <dbReference type="HAMAP-Rule" id="MF_00471"/>
    </source>
</evidence>
<proteinExistence type="inferred from homology"/>